<sequence>MAKSIVLYGGQFNPIHIAHMVVASEVNAFIKPDVFYFIPSFISPLKEHTDYLEGRYRVDMIQSVIDDLGFGRICLNEIERRGQSYTYDTVMYILDKHPDAKLYLVIGTDQYNQLHKWFKINELKSYITFVIVNRDKTTQEVESEMLSITIPRIDISSTLIRKRVKNKENIQALVSPSVEQYIREEGLYES</sequence>
<gene>
    <name evidence="1" type="primary">nadD</name>
    <name type="ordered locus">SSP1164</name>
</gene>
<comment type="function">
    <text evidence="1">Catalyzes the reversible adenylation of nicotinate mononucleotide (NaMN) to nicotinic acid adenine dinucleotide (NaAD).</text>
</comment>
<comment type="catalytic activity">
    <reaction evidence="1">
        <text>nicotinate beta-D-ribonucleotide + ATP + H(+) = deamido-NAD(+) + diphosphate</text>
        <dbReference type="Rhea" id="RHEA:22860"/>
        <dbReference type="ChEBI" id="CHEBI:15378"/>
        <dbReference type="ChEBI" id="CHEBI:30616"/>
        <dbReference type="ChEBI" id="CHEBI:33019"/>
        <dbReference type="ChEBI" id="CHEBI:57502"/>
        <dbReference type="ChEBI" id="CHEBI:58437"/>
        <dbReference type="EC" id="2.7.7.18"/>
    </reaction>
</comment>
<comment type="pathway">
    <text evidence="1">Cofactor biosynthesis; NAD(+) biosynthesis; deamido-NAD(+) from nicotinate D-ribonucleotide: step 1/1.</text>
</comment>
<comment type="similarity">
    <text evidence="1">Belongs to the NadD family.</text>
</comment>
<evidence type="ECO:0000255" key="1">
    <source>
        <dbReference type="HAMAP-Rule" id="MF_00244"/>
    </source>
</evidence>
<feature type="chain" id="PRO_0000310153" description="Probable nicotinate-nucleotide adenylyltransferase">
    <location>
        <begin position="1"/>
        <end position="190"/>
    </location>
</feature>
<organism>
    <name type="scientific">Staphylococcus saprophyticus subsp. saprophyticus (strain ATCC 15305 / DSM 20229 / NCIMB 8711 / NCTC 7292 / S-41)</name>
    <dbReference type="NCBI Taxonomy" id="342451"/>
    <lineage>
        <taxon>Bacteria</taxon>
        <taxon>Bacillati</taxon>
        <taxon>Bacillota</taxon>
        <taxon>Bacilli</taxon>
        <taxon>Bacillales</taxon>
        <taxon>Staphylococcaceae</taxon>
        <taxon>Staphylococcus</taxon>
    </lineage>
</organism>
<dbReference type="EC" id="2.7.7.18" evidence="1"/>
<dbReference type="EMBL" id="AP008934">
    <property type="protein sequence ID" value="BAE18309.1"/>
    <property type="molecule type" value="Genomic_DNA"/>
</dbReference>
<dbReference type="RefSeq" id="WP_011302984.1">
    <property type="nucleotide sequence ID" value="NZ_MTGA01000038.1"/>
</dbReference>
<dbReference type="SMR" id="Q49Y35"/>
<dbReference type="GeneID" id="3617048"/>
<dbReference type="KEGG" id="ssp:SSP1164"/>
<dbReference type="PATRIC" id="fig|342451.11.peg.1162"/>
<dbReference type="eggNOG" id="COG1057">
    <property type="taxonomic scope" value="Bacteria"/>
</dbReference>
<dbReference type="HOGENOM" id="CLU_069765_3_1_9"/>
<dbReference type="OrthoDB" id="5295945at2"/>
<dbReference type="UniPathway" id="UPA00253">
    <property type="reaction ID" value="UER00332"/>
</dbReference>
<dbReference type="Proteomes" id="UP000006371">
    <property type="component" value="Chromosome"/>
</dbReference>
<dbReference type="GO" id="GO:0005524">
    <property type="term" value="F:ATP binding"/>
    <property type="evidence" value="ECO:0007669"/>
    <property type="project" value="UniProtKB-KW"/>
</dbReference>
<dbReference type="GO" id="GO:0004515">
    <property type="term" value="F:nicotinate-nucleotide adenylyltransferase activity"/>
    <property type="evidence" value="ECO:0007669"/>
    <property type="project" value="UniProtKB-UniRule"/>
</dbReference>
<dbReference type="GO" id="GO:0009435">
    <property type="term" value="P:NAD biosynthetic process"/>
    <property type="evidence" value="ECO:0007669"/>
    <property type="project" value="UniProtKB-UniRule"/>
</dbReference>
<dbReference type="CDD" id="cd02165">
    <property type="entry name" value="NMNAT"/>
    <property type="match status" value="1"/>
</dbReference>
<dbReference type="Gene3D" id="3.40.50.620">
    <property type="entry name" value="HUPs"/>
    <property type="match status" value="1"/>
</dbReference>
<dbReference type="HAMAP" id="MF_00244">
    <property type="entry name" value="NaMN_adenylyltr"/>
    <property type="match status" value="1"/>
</dbReference>
<dbReference type="InterPro" id="IPR004821">
    <property type="entry name" value="Cyt_trans-like"/>
</dbReference>
<dbReference type="InterPro" id="IPR005248">
    <property type="entry name" value="NadD/NMNAT"/>
</dbReference>
<dbReference type="InterPro" id="IPR014729">
    <property type="entry name" value="Rossmann-like_a/b/a_fold"/>
</dbReference>
<dbReference type="NCBIfam" id="TIGR00482">
    <property type="entry name" value="nicotinate (nicotinamide) nucleotide adenylyltransferase"/>
    <property type="match status" value="1"/>
</dbReference>
<dbReference type="PANTHER" id="PTHR39321">
    <property type="entry name" value="NICOTINATE-NUCLEOTIDE ADENYLYLTRANSFERASE-RELATED"/>
    <property type="match status" value="1"/>
</dbReference>
<dbReference type="PANTHER" id="PTHR39321:SF3">
    <property type="entry name" value="PHOSPHOPANTETHEINE ADENYLYLTRANSFERASE"/>
    <property type="match status" value="1"/>
</dbReference>
<dbReference type="Pfam" id="PF01467">
    <property type="entry name" value="CTP_transf_like"/>
    <property type="match status" value="1"/>
</dbReference>
<dbReference type="SUPFAM" id="SSF52374">
    <property type="entry name" value="Nucleotidylyl transferase"/>
    <property type="match status" value="1"/>
</dbReference>
<accession>Q49Y35</accession>
<proteinExistence type="inferred from homology"/>
<protein>
    <recommendedName>
        <fullName evidence="1">Probable nicotinate-nucleotide adenylyltransferase</fullName>
        <ecNumber evidence="1">2.7.7.18</ecNumber>
    </recommendedName>
    <alternativeName>
        <fullName evidence="1">Deamido-NAD(+) diphosphorylase</fullName>
    </alternativeName>
    <alternativeName>
        <fullName evidence="1">Deamido-NAD(+) pyrophosphorylase</fullName>
    </alternativeName>
    <alternativeName>
        <fullName evidence="1">Nicotinate mononucleotide adenylyltransferase</fullName>
        <shortName evidence="1">NaMN adenylyltransferase</shortName>
    </alternativeName>
</protein>
<name>NADD_STAS1</name>
<keyword id="KW-0067">ATP-binding</keyword>
<keyword id="KW-0520">NAD</keyword>
<keyword id="KW-0547">Nucleotide-binding</keyword>
<keyword id="KW-0548">Nucleotidyltransferase</keyword>
<keyword id="KW-0662">Pyridine nucleotide biosynthesis</keyword>
<keyword id="KW-1185">Reference proteome</keyword>
<keyword id="KW-0808">Transferase</keyword>
<reference key="1">
    <citation type="journal article" date="2005" name="Proc. Natl. Acad. Sci. U.S.A.">
        <title>Whole genome sequence of Staphylococcus saprophyticus reveals the pathogenesis of uncomplicated urinary tract infection.</title>
        <authorList>
            <person name="Kuroda M."/>
            <person name="Yamashita A."/>
            <person name="Hirakawa H."/>
            <person name="Kumano M."/>
            <person name="Morikawa K."/>
            <person name="Higashide M."/>
            <person name="Maruyama A."/>
            <person name="Inose Y."/>
            <person name="Matoba K."/>
            <person name="Toh H."/>
            <person name="Kuhara S."/>
            <person name="Hattori M."/>
            <person name="Ohta T."/>
        </authorList>
    </citation>
    <scope>NUCLEOTIDE SEQUENCE [LARGE SCALE GENOMIC DNA]</scope>
    <source>
        <strain>ATCC 15305 / DSM 20229 / NCIMB 8711 / NCTC 7292 / S-41</strain>
    </source>
</reference>